<keyword id="KW-0686">Riboflavin biosynthesis</keyword>
<keyword id="KW-0808">Transferase</keyword>
<dbReference type="EC" id="2.5.1.78" evidence="1"/>
<dbReference type="EMBL" id="CP000099">
    <property type="protein sequence ID" value="AAZ71013.1"/>
    <property type="molecule type" value="Genomic_DNA"/>
</dbReference>
<dbReference type="SMR" id="Q46AS9"/>
<dbReference type="STRING" id="269797.Mbar_A2082"/>
<dbReference type="PaxDb" id="269797-Mbar_A2082"/>
<dbReference type="KEGG" id="mba:Mbar_A2082"/>
<dbReference type="eggNOG" id="arCOG01323">
    <property type="taxonomic scope" value="Archaea"/>
</dbReference>
<dbReference type="HOGENOM" id="CLU_089358_3_1_2"/>
<dbReference type="OrthoDB" id="7610at2157"/>
<dbReference type="UniPathway" id="UPA00275">
    <property type="reaction ID" value="UER00404"/>
</dbReference>
<dbReference type="GO" id="GO:0009349">
    <property type="term" value="C:riboflavin synthase complex"/>
    <property type="evidence" value="ECO:0007669"/>
    <property type="project" value="InterPro"/>
</dbReference>
<dbReference type="GO" id="GO:0000906">
    <property type="term" value="F:6,7-dimethyl-8-ribityllumazine synthase activity"/>
    <property type="evidence" value="ECO:0007669"/>
    <property type="project" value="UniProtKB-UniRule"/>
</dbReference>
<dbReference type="GO" id="GO:0009231">
    <property type="term" value="P:riboflavin biosynthetic process"/>
    <property type="evidence" value="ECO:0007669"/>
    <property type="project" value="UniProtKB-UniRule"/>
</dbReference>
<dbReference type="CDD" id="cd09211">
    <property type="entry name" value="Lumazine_synthase_archaeal"/>
    <property type="match status" value="1"/>
</dbReference>
<dbReference type="FunFam" id="3.40.50.960:FF:000003">
    <property type="entry name" value="6,7-dimethyl-8-ribityllumazine synthase"/>
    <property type="match status" value="1"/>
</dbReference>
<dbReference type="Gene3D" id="3.40.50.960">
    <property type="entry name" value="Lumazine/riboflavin synthase"/>
    <property type="match status" value="1"/>
</dbReference>
<dbReference type="HAMAP" id="MF_00178">
    <property type="entry name" value="Lumazine_synth"/>
    <property type="match status" value="1"/>
</dbReference>
<dbReference type="InterPro" id="IPR034964">
    <property type="entry name" value="LS"/>
</dbReference>
<dbReference type="InterPro" id="IPR002180">
    <property type="entry name" value="LS/RS"/>
</dbReference>
<dbReference type="InterPro" id="IPR036467">
    <property type="entry name" value="LS/RS_sf"/>
</dbReference>
<dbReference type="NCBIfam" id="TIGR00114">
    <property type="entry name" value="lumazine-synth"/>
    <property type="match status" value="1"/>
</dbReference>
<dbReference type="PANTHER" id="PTHR21058:SF0">
    <property type="entry name" value="6,7-DIMETHYL-8-RIBITYLLUMAZINE SYNTHASE"/>
    <property type="match status" value="1"/>
</dbReference>
<dbReference type="PANTHER" id="PTHR21058">
    <property type="entry name" value="6,7-DIMETHYL-8-RIBITYLLUMAZINE SYNTHASE DMRL SYNTHASE LUMAZINE SYNTHASE"/>
    <property type="match status" value="1"/>
</dbReference>
<dbReference type="Pfam" id="PF00885">
    <property type="entry name" value="DMRL_synthase"/>
    <property type="match status" value="1"/>
</dbReference>
<dbReference type="SUPFAM" id="SSF52121">
    <property type="entry name" value="Lumazine synthase"/>
    <property type="match status" value="1"/>
</dbReference>
<evidence type="ECO:0000255" key="1">
    <source>
        <dbReference type="HAMAP-Rule" id="MF_00178"/>
    </source>
</evidence>
<accession>Q46AS9</accession>
<gene>
    <name evidence="1" type="primary">ribH</name>
    <name type="ordered locus">Mbar_A2082</name>
</gene>
<reference key="1">
    <citation type="journal article" date="2006" name="J. Bacteriol.">
        <title>The Methanosarcina barkeri genome: comparative analysis with Methanosarcina acetivorans and Methanosarcina mazei reveals extensive rearrangement within methanosarcinal genomes.</title>
        <authorList>
            <person name="Maeder D.L."/>
            <person name="Anderson I."/>
            <person name="Brettin T.S."/>
            <person name="Bruce D.C."/>
            <person name="Gilna P."/>
            <person name="Han C.S."/>
            <person name="Lapidus A."/>
            <person name="Metcalf W.W."/>
            <person name="Saunders E."/>
            <person name="Tapia R."/>
            <person name="Sowers K.R."/>
        </authorList>
    </citation>
    <scope>NUCLEOTIDE SEQUENCE [LARGE SCALE GENOMIC DNA]</scope>
    <source>
        <strain>Fusaro / DSM 804</strain>
    </source>
</reference>
<proteinExistence type="inferred from homology"/>
<protein>
    <recommendedName>
        <fullName evidence="1">6,7-dimethyl-8-ribityllumazine synthase</fullName>
        <shortName evidence="1">DMRL synthase</shortName>
        <shortName evidence="1">LS</shortName>
        <shortName evidence="1">Lumazine synthase</shortName>
        <ecNumber evidence="1">2.5.1.78</ecNumber>
    </recommendedName>
</protein>
<name>RISB_METBF</name>
<sequence length="134" mass="14863">MTISLGFVVAEFNRDLTYQMELLGREHAEFLGATVKETILVPGVFDMPLAIKKLCQRDDIDAVVTIGSVIEGDTDHDQVVMQHAARKIMDLSLEFNKPVTLGIPGPGMTRMAAHERVDYAKRAVEAAVKLVRRL</sequence>
<comment type="function">
    <text evidence="1">Catalyzes the formation of 6,7-dimethyl-8-ribityllumazine by condensation of 5-amino-6-(D-ribitylamino)uracil with 3,4-dihydroxy-2-butanone 4-phosphate. This is the penultimate step in the biosynthesis of riboflavin.</text>
</comment>
<comment type="catalytic activity">
    <reaction evidence="1">
        <text>(2S)-2-hydroxy-3-oxobutyl phosphate + 5-amino-6-(D-ribitylamino)uracil = 6,7-dimethyl-8-(1-D-ribityl)lumazine + phosphate + 2 H2O + H(+)</text>
        <dbReference type="Rhea" id="RHEA:26152"/>
        <dbReference type="ChEBI" id="CHEBI:15377"/>
        <dbReference type="ChEBI" id="CHEBI:15378"/>
        <dbReference type="ChEBI" id="CHEBI:15934"/>
        <dbReference type="ChEBI" id="CHEBI:43474"/>
        <dbReference type="ChEBI" id="CHEBI:58201"/>
        <dbReference type="ChEBI" id="CHEBI:58830"/>
        <dbReference type="EC" id="2.5.1.78"/>
    </reaction>
</comment>
<comment type="pathway">
    <text evidence="1">Cofactor biosynthesis; riboflavin biosynthesis; riboflavin from 2-hydroxy-3-oxobutyl phosphate and 5-amino-6-(D-ribitylamino)uracil: step 1/2.</text>
</comment>
<comment type="similarity">
    <text evidence="1">Belongs to the DMRL synthase family.</text>
</comment>
<organism>
    <name type="scientific">Methanosarcina barkeri (strain Fusaro / DSM 804)</name>
    <dbReference type="NCBI Taxonomy" id="269797"/>
    <lineage>
        <taxon>Archaea</taxon>
        <taxon>Methanobacteriati</taxon>
        <taxon>Methanobacteriota</taxon>
        <taxon>Stenosarchaea group</taxon>
        <taxon>Methanomicrobia</taxon>
        <taxon>Methanosarcinales</taxon>
        <taxon>Methanosarcinaceae</taxon>
        <taxon>Methanosarcina</taxon>
    </lineage>
</organism>
<feature type="chain" id="PRO_1000040446" description="6,7-dimethyl-8-ribityllumazine synthase">
    <location>
        <begin position="1"/>
        <end position="134"/>
    </location>
</feature>
<feature type="active site" description="Proton donor" evidence="1">
    <location>
        <position position="76"/>
    </location>
</feature>
<feature type="binding site" evidence="1">
    <location>
        <position position="12"/>
    </location>
    <ligand>
        <name>5-amino-6-(D-ribitylamino)uracil</name>
        <dbReference type="ChEBI" id="CHEBI:15934"/>
    </ligand>
</feature>
<feature type="binding site" evidence="1">
    <location>
        <begin position="44"/>
        <end position="46"/>
    </location>
    <ligand>
        <name>5-amino-6-(D-ribitylamino)uracil</name>
        <dbReference type="ChEBI" id="CHEBI:15934"/>
    </ligand>
</feature>
<feature type="binding site" evidence="1">
    <location>
        <begin position="68"/>
        <end position="70"/>
    </location>
    <ligand>
        <name>5-amino-6-(D-ribitylamino)uracil</name>
        <dbReference type="ChEBI" id="CHEBI:15934"/>
    </ligand>
</feature>
<feature type="binding site" evidence="1">
    <location>
        <begin position="73"/>
        <end position="74"/>
    </location>
    <ligand>
        <name>(2S)-2-hydroxy-3-oxobutyl phosphate</name>
        <dbReference type="ChEBI" id="CHEBI:58830"/>
    </ligand>
</feature>
<feature type="binding site" evidence="1">
    <location>
        <position position="101"/>
    </location>
    <ligand>
        <name>5-amino-6-(D-ribitylamino)uracil</name>
        <dbReference type="ChEBI" id="CHEBI:15934"/>
    </ligand>
</feature>
<feature type="binding site" evidence="1">
    <location>
        <position position="116"/>
    </location>
    <ligand>
        <name>(2S)-2-hydroxy-3-oxobutyl phosphate</name>
        <dbReference type="ChEBI" id="CHEBI:58830"/>
    </ligand>
</feature>